<dbReference type="EMBL" id="CP000783">
    <property type="protein sequence ID" value="ABU78371.1"/>
    <property type="molecule type" value="Genomic_DNA"/>
</dbReference>
<dbReference type="RefSeq" id="WP_004385445.1">
    <property type="nucleotide sequence ID" value="NC_009778.1"/>
</dbReference>
<dbReference type="SMR" id="A7MI25"/>
<dbReference type="KEGG" id="esa:ESA_03148"/>
<dbReference type="HOGENOM" id="CLU_190008_0_0_6"/>
<dbReference type="Proteomes" id="UP000000260">
    <property type="component" value="Chromosome"/>
</dbReference>
<dbReference type="HAMAP" id="MF_01064">
    <property type="entry name" value="UPF0253"/>
    <property type="match status" value="1"/>
</dbReference>
<dbReference type="InterPro" id="IPR009624">
    <property type="entry name" value="UPF0253"/>
</dbReference>
<dbReference type="NCBIfam" id="NF003436">
    <property type="entry name" value="PRK04964.1"/>
    <property type="match status" value="1"/>
</dbReference>
<dbReference type="Pfam" id="PF06786">
    <property type="entry name" value="UPF0253"/>
    <property type="match status" value="1"/>
</dbReference>
<name>Y3148_CROS8</name>
<feature type="chain" id="PRO_1000064503" description="UPF0253 protein ESA_03148">
    <location>
        <begin position="1"/>
        <end position="66"/>
    </location>
</feature>
<accession>A7MI25</accession>
<comment type="similarity">
    <text evidence="1">Belongs to the UPF0253 family.</text>
</comment>
<organism>
    <name type="scientific">Cronobacter sakazakii (strain ATCC BAA-894)</name>
    <name type="common">Enterobacter sakazakii</name>
    <dbReference type="NCBI Taxonomy" id="290339"/>
    <lineage>
        <taxon>Bacteria</taxon>
        <taxon>Pseudomonadati</taxon>
        <taxon>Pseudomonadota</taxon>
        <taxon>Gammaproteobacteria</taxon>
        <taxon>Enterobacterales</taxon>
        <taxon>Enterobacteriaceae</taxon>
        <taxon>Cronobacter</taxon>
    </lineage>
</organism>
<proteinExistence type="inferred from homology"/>
<sequence length="66" mass="7257">MDKYCELIRQRYSQIASGELGYIPDALGCVLRALNEVASDEALSESVREQAAYAAANLLVSDYVNE</sequence>
<protein>
    <recommendedName>
        <fullName evidence="1">UPF0253 protein ESA_03148</fullName>
    </recommendedName>
</protein>
<gene>
    <name type="ordered locus">ESA_03148</name>
</gene>
<evidence type="ECO:0000255" key="1">
    <source>
        <dbReference type="HAMAP-Rule" id="MF_01064"/>
    </source>
</evidence>
<reference key="1">
    <citation type="journal article" date="2010" name="PLoS ONE">
        <title>Genome sequence of Cronobacter sakazakii BAA-894 and comparative genomic hybridization analysis with other Cronobacter species.</title>
        <authorList>
            <person name="Kucerova E."/>
            <person name="Clifton S.W."/>
            <person name="Xia X.Q."/>
            <person name="Long F."/>
            <person name="Porwollik S."/>
            <person name="Fulton L."/>
            <person name="Fronick C."/>
            <person name="Minx P."/>
            <person name="Kyung K."/>
            <person name="Warren W."/>
            <person name="Fulton R."/>
            <person name="Feng D."/>
            <person name="Wollam A."/>
            <person name="Shah N."/>
            <person name="Bhonagiri V."/>
            <person name="Nash W.E."/>
            <person name="Hallsworth-Pepin K."/>
            <person name="Wilson R.K."/>
            <person name="McClelland M."/>
            <person name="Forsythe S.J."/>
        </authorList>
    </citation>
    <scope>NUCLEOTIDE SEQUENCE [LARGE SCALE GENOMIC DNA]</scope>
    <source>
        <strain>ATCC BAA-894</strain>
    </source>
</reference>
<keyword id="KW-1185">Reference proteome</keyword>